<name>TAC3_TACGI</name>
<protein>
    <recommendedName>
        <fullName>Tachyplesin-3</fullName>
    </recommendedName>
    <alternativeName>
        <fullName>Tachyplesin III</fullName>
    </alternativeName>
</protein>
<organism>
    <name type="scientific">Tachypleus gigas</name>
    <name type="common">Southeast Asian horseshoe crab</name>
    <dbReference type="NCBI Taxonomy" id="6852"/>
    <lineage>
        <taxon>Eukaryota</taxon>
        <taxon>Metazoa</taxon>
        <taxon>Ecdysozoa</taxon>
        <taxon>Arthropoda</taxon>
        <taxon>Chelicerata</taxon>
        <taxon>Merostomata</taxon>
        <taxon>Xiphosura</taxon>
        <taxon>Limulidae</taxon>
        <taxon>Tachypleus</taxon>
    </lineage>
</organism>
<keyword id="KW-0002">3D-structure</keyword>
<keyword id="KW-0027">Amidation</keyword>
<keyword id="KW-0044">Antibiotic</keyword>
<keyword id="KW-0929">Antimicrobial</keyword>
<keyword id="KW-0903">Direct protein sequencing</keyword>
<keyword id="KW-1015">Disulfide bond</keyword>
<keyword id="KW-0964">Secreted</keyword>
<proteinExistence type="evidence at protein level"/>
<accession>P18252</accession>
<comment type="function">
    <text>Significantly inhibits the growth of Gram-negative and Gram-positive bacteria.</text>
</comment>
<comment type="subcellular location">
    <subcellularLocation>
        <location>Secreted</location>
    </subcellularLocation>
</comment>
<comment type="tissue specificity">
    <text>Hemocytes.</text>
</comment>
<comment type="similarity">
    <text evidence="3">Belongs to the tachyplesin/polyphemusin family.</text>
</comment>
<reference key="1">
    <citation type="journal article" date="1990" name="J. Biochem.">
        <title>Tachyplesins isolated from hemocytes of Southeast Asian horseshoe crabs (Carcinoscorpius rotundicauda and Tachypleus gigas): identification of a new tachyplesin, tachyplesin III, and a processing intermediate of its precursor.</title>
        <authorList>
            <person name="Muta T."/>
            <person name="Fujimoto T."/>
            <person name="Nakajima H."/>
            <person name="Iwanaga S."/>
        </authorList>
    </citation>
    <scope>PROTEIN SEQUENCE</scope>
    <scope>AMIDATION AT ARG-17</scope>
</reference>
<dbReference type="PIR" id="JX0125">
    <property type="entry name" value="JX0125"/>
</dbReference>
<dbReference type="PDB" id="6PI3">
    <property type="method" value="NMR"/>
    <property type="chains" value="A=1-17"/>
</dbReference>
<dbReference type="PDB" id="6PIP">
    <property type="method" value="NMR"/>
    <property type="chains" value="A=1-17"/>
</dbReference>
<dbReference type="PDBsum" id="6PI3"/>
<dbReference type="PDBsum" id="6PIP"/>
<dbReference type="BMRB" id="P18252"/>
<dbReference type="SMR" id="P18252"/>
<dbReference type="GO" id="GO:0005576">
    <property type="term" value="C:extracellular region"/>
    <property type="evidence" value="ECO:0007669"/>
    <property type="project" value="UniProtKB-SubCell"/>
</dbReference>
<dbReference type="GO" id="GO:0042742">
    <property type="term" value="P:defense response to bacterium"/>
    <property type="evidence" value="ECO:0007669"/>
    <property type="project" value="UniProtKB-KW"/>
</dbReference>
<sequence length="17" mass="2241">KWCFRVCYRGICYRKCR</sequence>
<evidence type="ECO:0000250" key="1"/>
<evidence type="ECO:0000269" key="2">
    <source>
    </source>
</evidence>
<evidence type="ECO:0000305" key="3"/>
<evidence type="ECO:0007829" key="4">
    <source>
        <dbReference type="PDB" id="6PI3"/>
    </source>
</evidence>
<feature type="peptide" id="PRO_0000044451" description="Tachyplesin-3">
    <location>
        <begin position="1"/>
        <end position="17"/>
    </location>
</feature>
<feature type="modified residue" description="Arginine amide" evidence="2">
    <location>
        <position position="17"/>
    </location>
</feature>
<feature type="disulfide bond" evidence="1">
    <location>
        <begin position="3"/>
        <end position="16"/>
    </location>
</feature>
<feature type="disulfide bond" evidence="1">
    <location>
        <begin position="7"/>
        <end position="12"/>
    </location>
</feature>
<feature type="strand" evidence="4">
    <location>
        <begin position="3"/>
        <end position="8"/>
    </location>
</feature>
<feature type="strand" evidence="4">
    <location>
        <begin position="11"/>
        <end position="16"/>
    </location>
</feature>